<sequence>MKTLTIRQPDDWHLHLRDGSVLQAVAEHSAAHFARAIIMPNLVPPVVTTRDAAAYRERILAALSEGSAFTPLMTLYLTESSCADDIEAGFRSGLIKAVKLYPAGATTNSQSGVRNIEAVYPVLERMAKIGLPLCVHGEVTDPAVDIFDREAVFIERVLQPLRRRLPELRIVMEHVTTKDGVDFALSQDENVGATITTHHLIINRNAILAGGIRPHYYCLPVAKRESHRLALRAAAISGEGRFFLGTDSAPHLDPLKECACGCAGVFNAPNTMACLAHVFEEEGALDRLEAFTSLNGPAFYRLPPNEKRITLRRYDEPLEMERKVSVGDEAITVFDPMFPIHWKVED</sequence>
<protein>
    <recommendedName>
        <fullName evidence="1">Dihydroorotase</fullName>
        <shortName evidence="1">DHOase</shortName>
        <ecNumber evidence="1">3.5.2.3</ecNumber>
    </recommendedName>
</protein>
<reference key="1">
    <citation type="submission" date="2006-06" db="EMBL/GenBank/DDBJ databases">
        <title>Complete sequence of chromosome of Mesorhizobium sp. BNC1.</title>
        <authorList>
            <consortium name="US DOE Joint Genome Institute"/>
            <person name="Copeland A."/>
            <person name="Lucas S."/>
            <person name="Lapidus A."/>
            <person name="Barry K."/>
            <person name="Detter J.C."/>
            <person name="Glavina del Rio T."/>
            <person name="Hammon N."/>
            <person name="Israni S."/>
            <person name="Dalin E."/>
            <person name="Tice H."/>
            <person name="Pitluck S."/>
            <person name="Chertkov O."/>
            <person name="Brettin T."/>
            <person name="Bruce D."/>
            <person name="Han C."/>
            <person name="Tapia R."/>
            <person name="Gilna P."/>
            <person name="Schmutz J."/>
            <person name="Larimer F."/>
            <person name="Land M."/>
            <person name="Hauser L."/>
            <person name="Kyrpides N."/>
            <person name="Mikhailova N."/>
            <person name="Richardson P."/>
        </authorList>
    </citation>
    <scope>NUCLEOTIDE SEQUENCE [LARGE SCALE GENOMIC DNA]</scope>
    <source>
        <strain>BNC1</strain>
    </source>
</reference>
<comment type="function">
    <text evidence="1">Catalyzes the reversible cyclization of carbamoyl aspartate to dihydroorotate.</text>
</comment>
<comment type="catalytic activity">
    <reaction evidence="1">
        <text>(S)-dihydroorotate + H2O = N-carbamoyl-L-aspartate + H(+)</text>
        <dbReference type="Rhea" id="RHEA:24296"/>
        <dbReference type="ChEBI" id="CHEBI:15377"/>
        <dbReference type="ChEBI" id="CHEBI:15378"/>
        <dbReference type="ChEBI" id="CHEBI:30864"/>
        <dbReference type="ChEBI" id="CHEBI:32814"/>
        <dbReference type="EC" id="3.5.2.3"/>
    </reaction>
</comment>
<comment type="cofactor">
    <cofactor evidence="1">
        <name>Zn(2+)</name>
        <dbReference type="ChEBI" id="CHEBI:29105"/>
    </cofactor>
    <text evidence="1">Binds 2 Zn(2+) ions per subunit.</text>
</comment>
<comment type="pathway">
    <text evidence="1">Pyrimidine metabolism; UMP biosynthesis via de novo pathway; (S)-dihydroorotate from bicarbonate: step 3/3.</text>
</comment>
<comment type="subunit">
    <text evidence="1">Homodimer.</text>
</comment>
<comment type="similarity">
    <text evidence="1">Belongs to the metallo-dependent hydrolases superfamily. DHOase family. Class II DHOase subfamily.</text>
</comment>
<proteinExistence type="inferred from homology"/>
<gene>
    <name evidence="1" type="primary">pyrC</name>
    <name type="ordered locus">Meso_1475</name>
</gene>
<keyword id="KW-0378">Hydrolase</keyword>
<keyword id="KW-0479">Metal-binding</keyword>
<keyword id="KW-0665">Pyrimidine biosynthesis</keyword>
<keyword id="KW-0862">Zinc</keyword>
<accession>Q11IA4</accession>
<name>PYRC_CHESB</name>
<dbReference type="EC" id="3.5.2.3" evidence="1"/>
<dbReference type="EMBL" id="CP000390">
    <property type="protein sequence ID" value="ABG62871.1"/>
    <property type="molecule type" value="Genomic_DNA"/>
</dbReference>
<dbReference type="SMR" id="Q11IA4"/>
<dbReference type="STRING" id="266779.Meso_1475"/>
<dbReference type="MEROPS" id="M38.A02"/>
<dbReference type="KEGG" id="mes:Meso_1475"/>
<dbReference type="eggNOG" id="COG0418">
    <property type="taxonomic scope" value="Bacteria"/>
</dbReference>
<dbReference type="HOGENOM" id="CLU_041558_1_0_5"/>
<dbReference type="OrthoDB" id="9808095at2"/>
<dbReference type="UniPathway" id="UPA00070">
    <property type="reaction ID" value="UER00117"/>
</dbReference>
<dbReference type="GO" id="GO:0005829">
    <property type="term" value="C:cytosol"/>
    <property type="evidence" value="ECO:0007669"/>
    <property type="project" value="TreeGrafter"/>
</dbReference>
<dbReference type="GO" id="GO:0004151">
    <property type="term" value="F:dihydroorotase activity"/>
    <property type="evidence" value="ECO:0007669"/>
    <property type="project" value="UniProtKB-UniRule"/>
</dbReference>
<dbReference type="GO" id="GO:0008270">
    <property type="term" value="F:zinc ion binding"/>
    <property type="evidence" value="ECO:0007669"/>
    <property type="project" value="UniProtKB-UniRule"/>
</dbReference>
<dbReference type="GO" id="GO:0006207">
    <property type="term" value="P:'de novo' pyrimidine nucleobase biosynthetic process"/>
    <property type="evidence" value="ECO:0007669"/>
    <property type="project" value="TreeGrafter"/>
</dbReference>
<dbReference type="GO" id="GO:0044205">
    <property type="term" value="P:'de novo' UMP biosynthetic process"/>
    <property type="evidence" value="ECO:0007669"/>
    <property type="project" value="UniProtKB-UniRule"/>
</dbReference>
<dbReference type="CDD" id="cd01294">
    <property type="entry name" value="DHOase"/>
    <property type="match status" value="1"/>
</dbReference>
<dbReference type="Gene3D" id="3.20.20.140">
    <property type="entry name" value="Metal-dependent hydrolases"/>
    <property type="match status" value="1"/>
</dbReference>
<dbReference type="HAMAP" id="MF_00219">
    <property type="entry name" value="PyrC_classII"/>
    <property type="match status" value="1"/>
</dbReference>
<dbReference type="InterPro" id="IPR006680">
    <property type="entry name" value="Amidohydro-rel"/>
</dbReference>
<dbReference type="InterPro" id="IPR004721">
    <property type="entry name" value="DHOdimr"/>
</dbReference>
<dbReference type="InterPro" id="IPR002195">
    <property type="entry name" value="Dihydroorotase_CS"/>
</dbReference>
<dbReference type="InterPro" id="IPR032466">
    <property type="entry name" value="Metal_Hydrolase"/>
</dbReference>
<dbReference type="NCBIfam" id="TIGR00856">
    <property type="entry name" value="pyrC_dimer"/>
    <property type="match status" value="1"/>
</dbReference>
<dbReference type="PANTHER" id="PTHR43137">
    <property type="entry name" value="DIHYDROOROTASE"/>
    <property type="match status" value="1"/>
</dbReference>
<dbReference type="PANTHER" id="PTHR43137:SF1">
    <property type="entry name" value="DIHYDROOROTASE"/>
    <property type="match status" value="1"/>
</dbReference>
<dbReference type="Pfam" id="PF01979">
    <property type="entry name" value="Amidohydro_1"/>
    <property type="match status" value="1"/>
</dbReference>
<dbReference type="PIRSF" id="PIRSF001237">
    <property type="entry name" value="DHOdimr"/>
    <property type="match status" value="1"/>
</dbReference>
<dbReference type="SUPFAM" id="SSF51556">
    <property type="entry name" value="Metallo-dependent hydrolases"/>
    <property type="match status" value="1"/>
</dbReference>
<dbReference type="PROSITE" id="PS00482">
    <property type="entry name" value="DIHYDROOROTASE_1"/>
    <property type="match status" value="1"/>
</dbReference>
<dbReference type="PROSITE" id="PS00483">
    <property type="entry name" value="DIHYDROOROTASE_2"/>
    <property type="match status" value="1"/>
</dbReference>
<organism>
    <name type="scientific">Chelativorans sp. (strain BNC1)</name>
    <dbReference type="NCBI Taxonomy" id="266779"/>
    <lineage>
        <taxon>Bacteria</taxon>
        <taxon>Pseudomonadati</taxon>
        <taxon>Pseudomonadota</taxon>
        <taxon>Alphaproteobacteria</taxon>
        <taxon>Hyphomicrobiales</taxon>
        <taxon>Phyllobacteriaceae</taxon>
        <taxon>Chelativorans</taxon>
    </lineage>
</organism>
<feature type="chain" id="PRO_1000024021" description="Dihydroorotase">
    <location>
        <begin position="1"/>
        <end position="346"/>
    </location>
</feature>
<feature type="active site" evidence="1">
    <location>
        <position position="247"/>
    </location>
</feature>
<feature type="binding site" evidence="1">
    <location>
        <position position="13"/>
    </location>
    <ligand>
        <name>Zn(2+)</name>
        <dbReference type="ChEBI" id="CHEBI:29105"/>
        <label>1</label>
    </ligand>
</feature>
<feature type="binding site" evidence="1">
    <location>
        <begin position="15"/>
        <end position="17"/>
    </location>
    <ligand>
        <name>substrate</name>
    </ligand>
</feature>
<feature type="binding site" evidence="1">
    <location>
        <position position="15"/>
    </location>
    <ligand>
        <name>Zn(2+)</name>
        <dbReference type="ChEBI" id="CHEBI:29105"/>
        <label>1</label>
    </ligand>
</feature>
<feature type="binding site" evidence="1">
    <location>
        <position position="41"/>
    </location>
    <ligand>
        <name>substrate</name>
    </ligand>
</feature>
<feature type="binding site" description="via carbamate group" evidence="1">
    <location>
        <position position="99"/>
    </location>
    <ligand>
        <name>Zn(2+)</name>
        <dbReference type="ChEBI" id="CHEBI:29105"/>
        <label>1</label>
    </ligand>
</feature>
<feature type="binding site" description="via carbamate group" evidence="1">
    <location>
        <position position="99"/>
    </location>
    <ligand>
        <name>Zn(2+)</name>
        <dbReference type="ChEBI" id="CHEBI:29105"/>
        <label>2</label>
    </ligand>
</feature>
<feature type="binding site" evidence="1">
    <location>
        <position position="136"/>
    </location>
    <ligand>
        <name>substrate</name>
    </ligand>
</feature>
<feature type="binding site" evidence="1">
    <location>
        <position position="136"/>
    </location>
    <ligand>
        <name>Zn(2+)</name>
        <dbReference type="ChEBI" id="CHEBI:29105"/>
        <label>2</label>
    </ligand>
</feature>
<feature type="binding site" evidence="1">
    <location>
        <position position="174"/>
    </location>
    <ligand>
        <name>Zn(2+)</name>
        <dbReference type="ChEBI" id="CHEBI:29105"/>
        <label>2</label>
    </ligand>
</feature>
<feature type="binding site" evidence="1">
    <location>
        <position position="219"/>
    </location>
    <ligand>
        <name>substrate</name>
    </ligand>
</feature>
<feature type="binding site" evidence="1">
    <location>
        <position position="247"/>
    </location>
    <ligand>
        <name>Zn(2+)</name>
        <dbReference type="ChEBI" id="CHEBI:29105"/>
        <label>1</label>
    </ligand>
</feature>
<feature type="binding site" evidence="1">
    <location>
        <position position="251"/>
    </location>
    <ligand>
        <name>substrate</name>
    </ligand>
</feature>
<feature type="binding site" evidence="1">
    <location>
        <position position="263"/>
    </location>
    <ligand>
        <name>substrate</name>
    </ligand>
</feature>
<feature type="modified residue" description="N6-carboxylysine" evidence="1">
    <location>
        <position position="99"/>
    </location>
</feature>
<evidence type="ECO:0000255" key="1">
    <source>
        <dbReference type="HAMAP-Rule" id="MF_00219"/>
    </source>
</evidence>